<comment type="function">
    <text evidence="2">Serine/threonine-protein kinase that plays an essential role in the regulation of actin filament dynamics. Acts downstream of several Rho family GTPase signal transduction pathways. Involved in astral microtubule organization and mitotic spindle orientation during early stages of mitosis by mediating phosphorylation of TPPP.</text>
</comment>
<comment type="catalytic activity">
    <reaction evidence="2">
        <text>L-seryl-[protein] + ATP = O-phospho-L-seryl-[protein] + ADP + H(+)</text>
        <dbReference type="Rhea" id="RHEA:17989"/>
        <dbReference type="Rhea" id="RHEA-COMP:9863"/>
        <dbReference type="Rhea" id="RHEA-COMP:11604"/>
        <dbReference type="ChEBI" id="CHEBI:15378"/>
        <dbReference type="ChEBI" id="CHEBI:29999"/>
        <dbReference type="ChEBI" id="CHEBI:30616"/>
        <dbReference type="ChEBI" id="CHEBI:83421"/>
        <dbReference type="ChEBI" id="CHEBI:456216"/>
        <dbReference type="EC" id="2.7.11.1"/>
    </reaction>
    <physiologicalReaction direction="left-to-right" evidence="2">
        <dbReference type="Rhea" id="RHEA:17990"/>
    </physiologicalReaction>
</comment>
<comment type="catalytic activity">
    <reaction evidence="2">
        <text>L-threonyl-[protein] + ATP = O-phospho-L-threonyl-[protein] + ADP + H(+)</text>
        <dbReference type="Rhea" id="RHEA:46608"/>
        <dbReference type="Rhea" id="RHEA-COMP:11060"/>
        <dbReference type="Rhea" id="RHEA-COMP:11605"/>
        <dbReference type="ChEBI" id="CHEBI:15378"/>
        <dbReference type="ChEBI" id="CHEBI:30013"/>
        <dbReference type="ChEBI" id="CHEBI:30616"/>
        <dbReference type="ChEBI" id="CHEBI:61977"/>
        <dbReference type="ChEBI" id="CHEBI:456216"/>
        <dbReference type="EC" id="2.7.11.1"/>
    </reaction>
    <physiologicalReaction direction="left-to-right" evidence="2">
        <dbReference type="Rhea" id="RHEA:46609"/>
    </physiologicalReaction>
</comment>
<comment type="subunit">
    <text evidence="1">Binds ROCK1 and LKAP.</text>
</comment>
<comment type="subcellular location">
    <subcellularLocation>
        <location evidence="2">Cytoplasm</location>
        <location evidence="2">Cytoskeleton</location>
        <location evidence="2">Spindle</location>
    </subcellularLocation>
    <subcellularLocation>
        <location evidence="2">Cytoplasm</location>
        <location evidence="2">Cytoskeleton</location>
        <location evidence="2">Microtubule organizing center</location>
        <location evidence="2">Centrosome</location>
    </subcellularLocation>
</comment>
<comment type="tissue specificity">
    <text evidence="7">Expressed predominantly in the lung, and faintly in the kidney, liver, brain, spleen, gizzard, and intestine.</text>
</comment>
<comment type="similarity">
    <text evidence="8">Belongs to the protein kinase superfamily. TKL Ser/Thr protein kinase family.</text>
</comment>
<feature type="chain" id="PRO_0000075812" description="LIM domain kinase 2">
    <location>
        <begin position="1"/>
        <end position="642"/>
    </location>
</feature>
<feature type="domain" description="LIM zinc-binding 1" evidence="3">
    <location>
        <begin position="12"/>
        <end position="63"/>
    </location>
</feature>
<feature type="domain" description="LIM zinc-binding 2" evidence="3">
    <location>
        <begin position="72"/>
        <end position="124"/>
    </location>
</feature>
<feature type="domain" description="PDZ" evidence="4">
    <location>
        <begin position="152"/>
        <end position="239"/>
    </location>
</feature>
<feature type="domain" description="Protein kinase" evidence="5">
    <location>
        <begin position="331"/>
        <end position="608"/>
    </location>
</feature>
<feature type="region of interest" description="Disordered" evidence="6">
    <location>
        <begin position="282"/>
        <end position="304"/>
    </location>
</feature>
<feature type="compositionally biased region" description="Low complexity" evidence="6">
    <location>
        <begin position="286"/>
        <end position="304"/>
    </location>
</feature>
<feature type="active site" evidence="2">
    <location>
        <position position="451"/>
    </location>
</feature>
<feature type="binding site" evidence="5">
    <location>
        <begin position="337"/>
        <end position="345"/>
    </location>
    <ligand>
        <name>ATP</name>
        <dbReference type="ChEBI" id="CHEBI:30616"/>
    </ligand>
</feature>
<feature type="binding site" evidence="5">
    <location>
        <position position="360"/>
    </location>
    <ligand>
        <name>ATP</name>
        <dbReference type="ChEBI" id="CHEBI:30616"/>
    </ligand>
</feature>
<feature type="modified residue" description="Phosphothreonine" evidence="1">
    <location>
        <position position="505"/>
    </location>
</feature>
<organism>
    <name type="scientific">Gallus gallus</name>
    <name type="common">Chicken</name>
    <dbReference type="NCBI Taxonomy" id="9031"/>
    <lineage>
        <taxon>Eukaryota</taxon>
        <taxon>Metazoa</taxon>
        <taxon>Chordata</taxon>
        <taxon>Craniata</taxon>
        <taxon>Vertebrata</taxon>
        <taxon>Euteleostomi</taxon>
        <taxon>Archelosauria</taxon>
        <taxon>Archosauria</taxon>
        <taxon>Dinosauria</taxon>
        <taxon>Saurischia</taxon>
        <taxon>Theropoda</taxon>
        <taxon>Coelurosauria</taxon>
        <taxon>Aves</taxon>
        <taxon>Neognathae</taxon>
        <taxon>Galloanserae</taxon>
        <taxon>Galliformes</taxon>
        <taxon>Phasianidae</taxon>
        <taxon>Phasianinae</taxon>
        <taxon>Gallus</taxon>
    </lineage>
</organism>
<name>LIMK2_CHICK</name>
<protein>
    <recommendedName>
        <fullName>LIM domain kinase 2</fullName>
        <shortName>LIMK-2</shortName>
        <ecNumber evidence="2">2.7.11.1</ecNumber>
    </recommendedName>
</protein>
<evidence type="ECO:0000250" key="1"/>
<evidence type="ECO:0000250" key="2">
    <source>
        <dbReference type="UniProtKB" id="P53671"/>
    </source>
</evidence>
<evidence type="ECO:0000255" key="3">
    <source>
        <dbReference type="PROSITE-ProRule" id="PRU00125"/>
    </source>
</evidence>
<evidence type="ECO:0000255" key="4">
    <source>
        <dbReference type="PROSITE-ProRule" id="PRU00143"/>
    </source>
</evidence>
<evidence type="ECO:0000255" key="5">
    <source>
        <dbReference type="PROSITE-ProRule" id="PRU00159"/>
    </source>
</evidence>
<evidence type="ECO:0000256" key="6">
    <source>
        <dbReference type="SAM" id="MobiDB-lite"/>
    </source>
</evidence>
<evidence type="ECO:0000269" key="7">
    <source>
    </source>
</evidence>
<evidence type="ECO:0000305" key="8"/>
<dbReference type="EC" id="2.7.11.1" evidence="2"/>
<dbReference type="EMBL" id="D26310">
    <property type="protein sequence ID" value="BAA05372.1"/>
    <property type="molecule type" value="mRNA"/>
</dbReference>
<dbReference type="PIR" id="JP0079">
    <property type="entry name" value="JP0079"/>
</dbReference>
<dbReference type="RefSeq" id="NP_990446.1">
    <property type="nucleotide sequence ID" value="NM_205115.2"/>
</dbReference>
<dbReference type="SMR" id="P53666"/>
<dbReference type="FunCoup" id="P53666">
    <property type="interactions" value="2189"/>
</dbReference>
<dbReference type="STRING" id="9031.ENSGALP00000011249"/>
<dbReference type="PaxDb" id="9031-ENSGALP00000011249"/>
<dbReference type="Ensembl" id="ENSGALT00010065420.1">
    <property type="protein sequence ID" value="ENSGALP00010039813.1"/>
    <property type="gene ID" value="ENSGALG00010026980.1"/>
</dbReference>
<dbReference type="GeneID" id="396010"/>
<dbReference type="KEGG" id="gga:396010"/>
<dbReference type="CTD" id="3985"/>
<dbReference type="VEuPathDB" id="HostDB:geneid_396010"/>
<dbReference type="eggNOG" id="KOG1187">
    <property type="taxonomic scope" value="Eukaryota"/>
</dbReference>
<dbReference type="GeneTree" id="ENSGT00940000159133"/>
<dbReference type="HOGENOM" id="CLU_000288_7_23_1"/>
<dbReference type="InParanoid" id="P53666"/>
<dbReference type="OrthoDB" id="20134at2759"/>
<dbReference type="PhylomeDB" id="P53666"/>
<dbReference type="TreeFam" id="TF318014"/>
<dbReference type="BRENDA" id="2.7.10.2">
    <property type="organism ID" value="1306"/>
</dbReference>
<dbReference type="PRO" id="PR:P53666"/>
<dbReference type="Proteomes" id="UP000000539">
    <property type="component" value="Chromosome 15"/>
</dbReference>
<dbReference type="Bgee" id="ENSGALG00000006950">
    <property type="expression patterns" value="Expressed in ovary and 12 other cell types or tissues"/>
</dbReference>
<dbReference type="GO" id="GO:0005813">
    <property type="term" value="C:centrosome"/>
    <property type="evidence" value="ECO:0000250"/>
    <property type="project" value="UniProtKB"/>
</dbReference>
<dbReference type="GO" id="GO:0005737">
    <property type="term" value="C:cytoplasm"/>
    <property type="evidence" value="ECO:0000318"/>
    <property type="project" value="GO_Central"/>
</dbReference>
<dbReference type="GO" id="GO:0072686">
    <property type="term" value="C:mitotic spindle"/>
    <property type="evidence" value="ECO:0000250"/>
    <property type="project" value="UniProtKB"/>
</dbReference>
<dbReference type="GO" id="GO:0005634">
    <property type="term" value="C:nucleus"/>
    <property type="evidence" value="ECO:0000318"/>
    <property type="project" value="GO_Central"/>
</dbReference>
<dbReference type="GO" id="GO:0005524">
    <property type="term" value="F:ATP binding"/>
    <property type="evidence" value="ECO:0007669"/>
    <property type="project" value="UniProtKB-KW"/>
</dbReference>
<dbReference type="GO" id="GO:0046872">
    <property type="term" value="F:metal ion binding"/>
    <property type="evidence" value="ECO:0007669"/>
    <property type="project" value="UniProtKB-KW"/>
</dbReference>
<dbReference type="GO" id="GO:0106310">
    <property type="term" value="F:protein serine kinase activity"/>
    <property type="evidence" value="ECO:0007669"/>
    <property type="project" value="RHEA"/>
</dbReference>
<dbReference type="GO" id="GO:0004674">
    <property type="term" value="F:protein serine/threonine kinase activity"/>
    <property type="evidence" value="ECO:0000250"/>
    <property type="project" value="UniProtKB"/>
</dbReference>
<dbReference type="GO" id="GO:0030036">
    <property type="term" value="P:actin cytoskeleton organization"/>
    <property type="evidence" value="ECO:0000318"/>
    <property type="project" value="GO_Central"/>
</dbReference>
<dbReference type="GO" id="GO:0030953">
    <property type="term" value="P:astral microtubule organization"/>
    <property type="evidence" value="ECO:0000250"/>
    <property type="project" value="UniProtKB"/>
</dbReference>
<dbReference type="GO" id="GO:0006468">
    <property type="term" value="P:protein phosphorylation"/>
    <property type="evidence" value="ECO:0000250"/>
    <property type="project" value="UniProtKB"/>
</dbReference>
<dbReference type="CDD" id="cd09465">
    <property type="entry name" value="LIM2_LIMK2"/>
    <property type="match status" value="1"/>
</dbReference>
<dbReference type="CDD" id="cd06754">
    <property type="entry name" value="PDZ_LIMK-like"/>
    <property type="match status" value="1"/>
</dbReference>
<dbReference type="CDD" id="cd14222">
    <property type="entry name" value="STKc_LIMK2"/>
    <property type="match status" value="1"/>
</dbReference>
<dbReference type="FunFam" id="2.10.110.10:FF:000038">
    <property type="entry name" value="LIM domain kinase 2"/>
    <property type="match status" value="1"/>
</dbReference>
<dbReference type="FunFam" id="2.10.110.10:FF:000090">
    <property type="entry name" value="LIM domain kinase 2"/>
    <property type="match status" value="1"/>
</dbReference>
<dbReference type="FunFam" id="3.30.200.20:FF:000038">
    <property type="entry name" value="LIM domain kinase 2"/>
    <property type="match status" value="1"/>
</dbReference>
<dbReference type="FunFam" id="1.10.510.10:FF:000197">
    <property type="entry name" value="LIM domain kinase 2 isoform X1"/>
    <property type="match status" value="1"/>
</dbReference>
<dbReference type="FunFam" id="2.30.42.10:FF:000082">
    <property type="entry name" value="LIM domain kinase 2 isoform X2"/>
    <property type="match status" value="1"/>
</dbReference>
<dbReference type="Gene3D" id="2.30.42.10">
    <property type="match status" value="1"/>
</dbReference>
<dbReference type="Gene3D" id="2.10.110.10">
    <property type="entry name" value="Cysteine Rich Protein"/>
    <property type="match status" value="2"/>
</dbReference>
<dbReference type="Gene3D" id="3.30.200.20">
    <property type="entry name" value="Phosphorylase Kinase, domain 1"/>
    <property type="match status" value="1"/>
</dbReference>
<dbReference type="Gene3D" id="1.10.510.10">
    <property type="entry name" value="Transferase(Phosphotransferase) domain 1"/>
    <property type="match status" value="1"/>
</dbReference>
<dbReference type="InterPro" id="IPR050940">
    <property type="entry name" value="Actin_reg-Ser/Thr_kinase"/>
</dbReference>
<dbReference type="InterPro" id="IPR011009">
    <property type="entry name" value="Kinase-like_dom_sf"/>
</dbReference>
<dbReference type="InterPro" id="IPR001478">
    <property type="entry name" value="PDZ"/>
</dbReference>
<dbReference type="InterPro" id="IPR036034">
    <property type="entry name" value="PDZ_sf"/>
</dbReference>
<dbReference type="InterPro" id="IPR000719">
    <property type="entry name" value="Prot_kinase_dom"/>
</dbReference>
<dbReference type="InterPro" id="IPR017441">
    <property type="entry name" value="Protein_kinase_ATP_BS"/>
</dbReference>
<dbReference type="InterPro" id="IPR001245">
    <property type="entry name" value="Ser-Thr/Tyr_kinase_cat_dom"/>
</dbReference>
<dbReference type="InterPro" id="IPR001781">
    <property type="entry name" value="Znf_LIM"/>
</dbReference>
<dbReference type="PANTHER" id="PTHR46485">
    <property type="entry name" value="LIM DOMAIN KINASE 1"/>
    <property type="match status" value="1"/>
</dbReference>
<dbReference type="PANTHER" id="PTHR46485:SF1">
    <property type="entry name" value="LIM DOMAIN KINASE 2"/>
    <property type="match status" value="1"/>
</dbReference>
<dbReference type="Pfam" id="PF00412">
    <property type="entry name" value="LIM"/>
    <property type="match status" value="2"/>
</dbReference>
<dbReference type="Pfam" id="PF00595">
    <property type="entry name" value="PDZ"/>
    <property type="match status" value="1"/>
</dbReference>
<dbReference type="Pfam" id="PF07714">
    <property type="entry name" value="PK_Tyr_Ser-Thr"/>
    <property type="match status" value="1"/>
</dbReference>
<dbReference type="SMART" id="SM00132">
    <property type="entry name" value="LIM"/>
    <property type="match status" value="2"/>
</dbReference>
<dbReference type="SMART" id="SM00228">
    <property type="entry name" value="PDZ"/>
    <property type="match status" value="1"/>
</dbReference>
<dbReference type="SUPFAM" id="SSF57716">
    <property type="entry name" value="Glucocorticoid receptor-like (DNA-binding domain)"/>
    <property type="match status" value="2"/>
</dbReference>
<dbReference type="SUPFAM" id="SSF50156">
    <property type="entry name" value="PDZ domain-like"/>
    <property type="match status" value="1"/>
</dbReference>
<dbReference type="SUPFAM" id="SSF56112">
    <property type="entry name" value="Protein kinase-like (PK-like)"/>
    <property type="match status" value="1"/>
</dbReference>
<dbReference type="PROSITE" id="PS00478">
    <property type="entry name" value="LIM_DOMAIN_1"/>
    <property type="match status" value="2"/>
</dbReference>
<dbReference type="PROSITE" id="PS50023">
    <property type="entry name" value="LIM_DOMAIN_2"/>
    <property type="match status" value="2"/>
</dbReference>
<dbReference type="PROSITE" id="PS50106">
    <property type="entry name" value="PDZ"/>
    <property type="match status" value="1"/>
</dbReference>
<dbReference type="PROSITE" id="PS00107">
    <property type="entry name" value="PROTEIN_KINASE_ATP"/>
    <property type="match status" value="1"/>
</dbReference>
<dbReference type="PROSITE" id="PS50011">
    <property type="entry name" value="PROTEIN_KINASE_DOM"/>
    <property type="match status" value="1"/>
</dbReference>
<reference key="1">
    <citation type="journal article" date="1994" name="J. Biochem.">
        <title>Molecular cloning of a chicken lung cDNA encoding a novel protein kinase with N-terminal two LIM/double zinc finger motifs.</title>
        <authorList>
            <person name="Ohashi K."/>
            <person name="Toshima J."/>
            <person name="Tajinda K."/>
            <person name="Nakamura T."/>
            <person name="Mizuno K."/>
        </authorList>
    </citation>
    <scope>NUCLEOTIDE SEQUENCE [MRNA]</scope>
    <scope>TISSUE SPECIFICITY</scope>
    <source>
        <tissue>Lung</tissue>
    </source>
</reference>
<sequence>MAGPPGEEVWRCLGCGDLIAAGQRLYRMVNEAWHISCFRCSECQDPLTNWYYEKDGKLYCHKDYWGKFGESCHGCSLLMTGPVMVAGEYKYHPECFACMSCKVIIEDGDTYALVQHSTLYCGKCHNQIVLTPMIEKHSTESLREQLPYTLTLISMPAATDGKRGFSVSVEGGCSSYATGVQVKEVNRMHISPDVRNAIHPADRILEINGAPIRTLQVEEVEDLIRKTSQTLQLLIEHDPVSQRLDRLRLDSRLPTHIKSPISPHSISPLDIKENLEGTLRRRSLRRSNSISKSPGPSSPKEPLLLSRDISRSESLRSSSSCSQQIFRPCDLIHGEVLGKGFFGQAIKVTHKATGKVMVMKELIRCDEETQKTFLTEVKVMRSLDHPNVLKFIGVLYKDKKLNLLTEYIEGGTLKDFLRNADPFPWQQKVSFAKGIASGMAYLHSMCIIHRDLNSHNCLIKLDKTVVVADFGLSRLIVEERKKPTLEKPSAKKRTLRKSDRKKRYTVVGNPYWMAPEMLNGQSYDETVDIFSFGIVLCEIIGQVYADPDCLPRTLDFGLNVKLFWEKFVPADCPPAFFPLAAICCRLEPESRPPFSKLEDSFEALSLYLGELAIPLPSELEELDHNVSVQYGLNRDKLPENTT</sequence>
<gene>
    <name type="primary">LIMK2</name>
    <name type="synonym">LIMK</name>
</gene>
<keyword id="KW-0067">ATP-binding</keyword>
<keyword id="KW-0963">Cytoplasm</keyword>
<keyword id="KW-0206">Cytoskeleton</keyword>
<keyword id="KW-0418">Kinase</keyword>
<keyword id="KW-0440">LIM domain</keyword>
<keyword id="KW-0479">Metal-binding</keyword>
<keyword id="KW-0547">Nucleotide-binding</keyword>
<keyword id="KW-0597">Phosphoprotein</keyword>
<keyword id="KW-1185">Reference proteome</keyword>
<keyword id="KW-0677">Repeat</keyword>
<keyword id="KW-0723">Serine/threonine-protein kinase</keyword>
<keyword id="KW-0808">Transferase</keyword>
<keyword id="KW-0862">Zinc</keyword>
<accession>P53666</accession>
<proteinExistence type="evidence at transcript level"/>